<dbReference type="EC" id="3.5.1.18" evidence="1"/>
<dbReference type="EMBL" id="BA000003">
    <property type="protein sequence ID" value="BAB12814.1"/>
    <property type="molecule type" value="Genomic_DNA"/>
</dbReference>
<dbReference type="RefSeq" id="NP_239928.1">
    <property type="nucleotide sequence ID" value="NC_002528.1"/>
</dbReference>
<dbReference type="RefSeq" id="WP_010895942.1">
    <property type="nucleotide sequence ID" value="NC_002528.1"/>
</dbReference>
<dbReference type="SMR" id="P57196"/>
<dbReference type="STRING" id="563178.BUAP5A_093"/>
<dbReference type="EnsemblBacteria" id="BAB12814">
    <property type="protein sequence ID" value="BAB12814"/>
    <property type="gene ID" value="BAB12814"/>
</dbReference>
<dbReference type="KEGG" id="buc:BU095"/>
<dbReference type="PATRIC" id="fig|107806.10.peg.102"/>
<dbReference type="eggNOG" id="COG0624">
    <property type="taxonomic scope" value="Bacteria"/>
</dbReference>
<dbReference type="HOGENOM" id="CLU_021802_4_0_6"/>
<dbReference type="UniPathway" id="UPA00034">
    <property type="reaction ID" value="UER00021"/>
</dbReference>
<dbReference type="Proteomes" id="UP000001806">
    <property type="component" value="Chromosome"/>
</dbReference>
<dbReference type="GO" id="GO:0008777">
    <property type="term" value="F:acetylornithine deacetylase activity"/>
    <property type="evidence" value="ECO:0007669"/>
    <property type="project" value="TreeGrafter"/>
</dbReference>
<dbReference type="GO" id="GO:0050897">
    <property type="term" value="F:cobalt ion binding"/>
    <property type="evidence" value="ECO:0007669"/>
    <property type="project" value="UniProtKB-UniRule"/>
</dbReference>
<dbReference type="GO" id="GO:0009014">
    <property type="term" value="F:succinyl-diaminopimelate desuccinylase activity"/>
    <property type="evidence" value="ECO:0007669"/>
    <property type="project" value="UniProtKB-UniRule"/>
</dbReference>
<dbReference type="GO" id="GO:0008270">
    <property type="term" value="F:zinc ion binding"/>
    <property type="evidence" value="ECO:0007669"/>
    <property type="project" value="UniProtKB-UniRule"/>
</dbReference>
<dbReference type="GO" id="GO:0019877">
    <property type="term" value="P:diaminopimelate biosynthetic process"/>
    <property type="evidence" value="ECO:0007669"/>
    <property type="project" value="UniProtKB-UniRule"/>
</dbReference>
<dbReference type="GO" id="GO:0006526">
    <property type="term" value="P:L-arginine biosynthetic process"/>
    <property type="evidence" value="ECO:0007669"/>
    <property type="project" value="TreeGrafter"/>
</dbReference>
<dbReference type="GO" id="GO:0009089">
    <property type="term" value="P:lysine biosynthetic process via diaminopimelate"/>
    <property type="evidence" value="ECO:0007669"/>
    <property type="project" value="UniProtKB-UniRule"/>
</dbReference>
<dbReference type="CDD" id="cd03891">
    <property type="entry name" value="M20_DapE_proteobac"/>
    <property type="match status" value="1"/>
</dbReference>
<dbReference type="FunFam" id="3.40.630.10:FF:000005">
    <property type="entry name" value="Succinyl-diaminopimelate desuccinylase"/>
    <property type="match status" value="1"/>
</dbReference>
<dbReference type="Gene3D" id="3.40.630.10">
    <property type="entry name" value="Zn peptidases"/>
    <property type="match status" value="2"/>
</dbReference>
<dbReference type="HAMAP" id="MF_01690">
    <property type="entry name" value="DapE"/>
    <property type="match status" value="1"/>
</dbReference>
<dbReference type="InterPro" id="IPR001261">
    <property type="entry name" value="ArgE/DapE_CS"/>
</dbReference>
<dbReference type="InterPro" id="IPR036264">
    <property type="entry name" value="Bact_exopeptidase_dim_dom"/>
</dbReference>
<dbReference type="InterPro" id="IPR005941">
    <property type="entry name" value="DapE_proteobac"/>
</dbReference>
<dbReference type="InterPro" id="IPR002933">
    <property type="entry name" value="Peptidase_M20"/>
</dbReference>
<dbReference type="InterPro" id="IPR011650">
    <property type="entry name" value="Peptidase_M20_dimer"/>
</dbReference>
<dbReference type="InterPro" id="IPR050072">
    <property type="entry name" value="Peptidase_M20A"/>
</dbReference>
<dbReference type="NCBIfam" id="TIGR01246">
    <property type="entry name" value="dapE_proteo"/>
    <property type="match status" value="1"/>
</dbReference>
<dbReference type="NCBIfam" id="NF009557">
    <property type="entry name" value="PRK13009.1"/>
    <property type="match status" value="1"/>
</dbReference>
<dbReference type="PANTHER" id="PTHR43808">
    <property type="entry name" value="ACETYLORNITHINE DEACETYLASE"/>
    <property type="match status" value="1"/>
</dbReference>
<dbReference type="PANTHER" id="PTHR43808:SF31">
    <property type="entry name" value="N-ACETYL-L-CITRULLINE DEACETYLASE"/>
    <property type="match status" value="1"/>
</dbReference>
<dbReference type="Pfam" id="PF07687">
    <property type="entry name" value="M20_dimer"/>
    <property type="match status" value="1"/>
</dbReference>
<dbReference type="Pfam" id="PF01546">
    <property type="entry name" value="Peptidase_M20"/>
    <property type="match status" value="1"/>
</dbReference>
<dbReference type="SUPFAM" id="SSF55031">
    <property type="entry name" value="Bacterial exopeptidase dimerisation domain"/>
    <property type="match status" value="1"/>
</dbReference>
<dbReference type="SUPFAM" id="SSF53187">
    <property type="entry name" value="Zn-dependent exopeptidases"/>
    <property type="match status" value="1"/>
</dbReference>
<dbReference type="PROSITE" id="PS00759">
    <property type="entry name" value="ARGE_DAPE_CPG2_2"/>
    <property type="match status" value="1"/>
</dbReference>
<name>DAPE_BUCAI</name>
<accession>P57196</accession>
<proteinExistence type="inferred from homology"/>
<sequence>MTCSITELAKKLISIPSVSPKDLGCQDIIIKRLCAIGFDIKRVNVNDTKNFWAFRGTGKTLTFAGHTDVVPIGQDKDWQTDPFQPVIRSGYLFGRGSADMKGALAAMITAAERFVNKFPNHKGRLSFLITSDEESSAVDGTIKIVEYLMSKRDMIDYCIVGEPSSTNIVGDVIKNGRRGSITANITIYGIQGHIAYPDLADNPIHKGLPVILKILSIKLDSGNDFFLPSSINIANIHAGNGFNNVIPGSLFVQFNIRFSSEVSEKHIQSQIVNILNSNDINYSIEWLFSGKPFITKKGLLIDTVIQSIFYFNKKKPILSTSGGTSDGRFIALMGSEVVELGLVNNTIHKVNECVKISDLKLLSCMYEDIMKNLLS</sequence>
<keyword id="KW-0028">Amino-acid biosynthesis</keyword>
<keyword id="KW-0170">Cobalt</keyword>
<keyword id="KW-0220">Diaminopimelate biosynthesis</keyword>
<keyword id="KW-0378">Hydrolase</keyword>
<keyword id="KW-0457">Lysine biosynthesis</keyword>
<keyword id="KW-0479">Metal-binding</keyword>
<keyword id="KW-1185">Reference proteome</keyword>
<keyword id="KW-0862">Zinc</keyword>
<evidence type="ECO:0000255" key="1">
    <source>
        <dbReference type="HAMAP-Rule" id="MF_01690"/>
    </source>
</evidence>
<reference key="1">
    <citation type="journal article" date="2000" name="Nature">
        <title>Genome sequence of the endocellular bacterial symbiont of aphids Buchnera sp. APS.</title>
        <authorList>
            <person name="Shigenobu S."/>
            <person name="Watanabe H."/>
            <person name="Hattori M."/>
            <person name="Sakaki Y."/>
            <person name="Ishikawa H."/>
        </authorList>
    </citation>
    <scope>NUCLEOTIDE SEQUENCE [LARGE SCALE GENOMIC DNA]</scope>
    <source>
        <strain>APS</strain>
    </source>
</reference>
<comment type="function">
    <text evidence="1">Catalyzes the hydrolysis of N-succinyl-L,L-diaminopimelic acid (SDAP), forming succinate and LL-2,6-diaminopimelate (DAP), an intermediate involved in the bacterial biosynthesis of lysine and meso-diaminopimelic acid, an essential component of bacterial cell walls.</text>
</comment>
<comment type="catalytic activity">
    <reaction evidence="1">
        <text>N-succinyl-(2S,6S)-2,6-diaminopimelate + H2O = (2S,6S)-2,6-diaminopimelate + succinate</text>
        <dbReference type="Rhea" id="RHEA:22608"/>
        <dbReference type="ChEBI" id="CHEBI:15377"/>
        <dbReference type="ChEBI" id="CHEBI:30031"/>
        <dbReference type="ChEBI" id="CHEBI:57609"/>
        <dbReference type="ChEBI" id="CHEBI:58087"/>
        <dbReference type="EC" id="3.5.1.18"/>
    </reaction>
</comment>
<comment type="cofactor">
    <cofactor evidence="1">
        <name>Zn(2+)</name>
        <dbReference type="ChEBI" id="CHEBI:29105"/>
    </cofactor>
    <cofactor evidence="1">
        <name>Co(2+)</name>
        <dbReference type="ChEBI" id="CHEBI:48828"/>
    </cofactor>
    <text evidence="1">Binds 2 Zn(2+) or Co(2+) ions per subunit.</text>
</comment>
<comment type="pathway">
    <text evidence="1">Amino-acid biosynthesis; L-lysine biosynthesis via DAP pathway; LL-2,6-diaminopimelate from (S)-tetrahydrodipicolinate (succinylase route): step 3/3.</text>
</comment>
<comment type="subunit">
    <text evidence="1">Homodimer.</text>
</comment>
<comment type="similarity">
    <text evidence="1">Belongs to the peptidase M20A family. DapE subfamily.</text>
</comment>
<protein>
    <recommendedName>
        <fullName evidence="1">Succinyl-diaminopimelate desuccinylase</fullName>
        <shortName evidence="1">SDAP desuccinylase</shortName>
        <ecNumber evidence="1">3.5.1.18</ecNumber>
    </recommendedName>
    <alternativeName>
        <fullName evidence="1">N-succinyl-LL-2,6-diaminoheptanedioate amidohydrolase</fullName>
    </alternativeName>
</protein>
<gene>
    <name evidence="1" type="primary">dapE</name>
    <name type="ordered locus">BU095</name>
</gene>
<feature type="chain" id="PRO_0000185257" description="Succinyl-diaminopimelate desuccinylase">
    <location>
        <begin position="1"/>
        <end position="375"/>
    </location>
</feature>
<feature type="active site" evidence="1">
    <location>
        <position position="68"/>
    </location>
</feature>
<feature type="active site" description="Proton acceptor" evidence="1">
    <location>
        <position position="133"/>
    </location>
</feature>
<feature type="binding site" evidence="1">
    <location>
        <position position="66"/>
    </location>
    <ligand>
        <name>Zn(2+)</name>
        <dbReference type="ChEBI" id="CHEBI:29105"/>
        <label>1</label>
    </ligand>
</feature>
<feature type="binding site" evidence="1">
    <location>
        <position position="99"/>
    </location>
    <ligand>
        <name>Zn(2+)</name>
        <dbReference type="ChEBI" id="CHEBI:29105"/>
        <label>1</label>
    </ligand>
</feature>
<feature type="binding site" evidence="1">
    <location>
        <position position="99"/>
    </location>
    <ligand>
        <name>Zn(2+)</name>
        <dbReference type="ChEBI" id="CHEBI:29105"/>
        <label>2</label>
    </ligand>
</feature>
<feature type="binding site" evidence="1">
    <location>
        <position position="134"/>
    </location>
    <ligand>
        <name>Zn(2+)</name>
        <dbReference type="ChEBI" id="CHEBI:29105"/>
        <label>2</label>
    </ligand>
</feature>
<feature type="binding site" evidence="1">
    <location>
        <position position="162"/>
    </location>
    <ligand>
        <name>Zn(2+)</name>
        <dbReference type="ChEBI" id="CHEBI:29105"/>
        <label>1</label>
    </ligand>
</feature>
<feature type="binding site" evidence="1">
    <location>
        <position position="348"/>
    </location>
    <ligand>
        <name>Zn(2+)</name>
        <dbReference type="ChEBI" id="CHEBI:29105"/>
        <label>2</label>
    </ligand>
</feature>
<organism>
    <name type="scientific">Buchnera aphidicola subsp. Acyrthosiphon pisum (strain APS)</name>
    <name type="common">Acyrthosiphon pisum symbiotic bacterium</name>
    <dbReference type="NCBI Taxonomy" id="107806"/>
    <lineage>
        <taxon>Bacteria</taxon>
        <taxon>Pseudomonadati</taxon>
        <taxon>Pseudomonadota</taxon>
        <taxon>Gammaproteobacteria</taxon>
        <taxon>Enterobacterales</taxon>
        <taxon>Erwiniaceae</taxon>
        <taxon>Buchnera</taxon>
    </lineage>
</organism>